<feature type="chain" id="PRO_1000059123" description="Protein RecA">
    <location>
        <begin position="1"/>
        <end position="348"/>
    </location>
</feature>
<feature type="binding site" evidence="1">
    <location>
        <begin position="67"/>
        <end position="74"/>
    </location>
    <ligand>
        <name>ATP</name>
        <dbReference type="ChEBI" id="CHEBI:30616"/>
    </ligand>
</feature>
<accession>Q18BJ4</accession>
<protein>
    <recommendedName>
        <fullName evidence="1">Protein RecA</fullName>
    </recommendedName>
    <alternativeName>
        <fullName evidence="1">Recombinase A</fullName>
    </alternativeName>
</protein>
<proteinExistence type="inferred from homology"/>
<gene>
    <name evidence="1" type="primary">recA</name>
    <name type="ordered locus">CD630_13280</name>
</gene>
<dbReference type="EMBL" id="AM180355">
    <property type="protein sequence ID" value="CAJ68186.1"/>
    <property type="molecule type" value="Genomic_DNA"/>
</dbReference>
<dbReference type="RefSeq" id="WP_003428218.1">
    <property type="nucleotide sequence ID" value="NZ_JAUPES010000015.1"/>
</dbReference>
<dbReference type="RefSeq" id="YP_001087824.1">
    <property type="nucleotide sequence ID" value="NC_009089.1"/>
</dbReference>
<dbReference type="SMR" id="Q18BJ4"/>
<dbReference type="STRING" id="272563.CD630_13280"/>
<dbReference type="EnsemblBacteria" id="CAJ68186">
    <property type="protein sequence ID" value="CAJ68186"/>
    <property type="gene ID" value="CD630_13280"/>
</dbReference>
<dbReference type="GeneID" id="66353729"/>
<dbReference type="KEGG" id="cdf:CD630_13280"/>
<dbReference type="KEGG" id="pdc:CDIF630_01484"/>
<dbReference type="PATRIC" id="fig|272563.120.peg.1388"/>
<dbReference type="eggNOG" id="COG0468">
    <property type="taxonomic scope" value="Bacteria"/>
</dbReference>
<dbReference type="OrthoDB" id="9776733at2"/>
<dbReference type="PhylomeDB" id="Q18BJ4"/>
<dbReference type="BioCyc" id="PDIF272563:G12WB-1463-MONOMER"/>
<dbReference type="Proteomes" id="UP000001978">
    <property type="component" value="Chromosome"/>
</dbReference>
<dbReference type="GO" id="GO:0005829">
    <property type="term" value="C:cytosol"/>
    <property type="evidence" value="ECO:0007669"/>
    <property type="project" value="TreeGrafter"/>
</dbReference>
<dbReference type="GO" id="GO:0005524">
    <property type="term" value="F:ATP binding"/>
    <property type="evidence" value="ECO:0007669"/>
    <property type="project" value="UniProtKB-UniRule"/>
</dbReference>
<dbReference type="GO" id="GO:0016887">
    <property type="term" value="F:ATP hydrolysis activity"/>
    <property type="evidence" value="ECO:0007669"/>
    <property type="project" value="InterPro"/>
</dbReference>
<dbReference type="GO" id="GO:0140664">
    <property type="term" value="F:ATP-dependent DNA damage sensor activity"/>
    <property type="evidence" value="ECO:0007669"/>
    <property type="project" value="InterPro"/>
</dbReference>
<dbReference type="GO" id="GO:0003684">
    <property type="term" value="F:damaged DNA binding"/>
    <property type="evidence" value="ECO:0007669"/>
    <property type="project" value="UniProtKB-UniRule"/>
</dbReference>
<dbReference type="GO" id="GO:0003697">
    <property type="term" value="F:single-stranded DNA binding"/>
    <property type="evidence" value="ECO:0007669"/>
    <property type="project" value="UniProtKB-UniRule"/>
</dbReference>
<dbReference type="GO" id="GO:0006310">
    <property type="term" value="P:DNA recombination"/>
    <property type="evidence" value="ECO:0007669"/>
    <property type="project" value="UniProtKB-UniRule"/>
</dbReference>
<dbReference type="GO" id="GO:0006281">
    <property type="term" value="P:DNA repair"/>
    <property type="evidence" value="ECO:0007669"/>
    <property type="project" value="UniProtKB-UniRule"/>
</dbReference>
<dbReference type="GO" id="GO:0009432">
    <property type="term" value="P:SOS response"/>
    <property type="evidence" value="ECO:0007669"/>
    <property type="project" value="UniProtKB-UniRule"/>
</dbReference>
<dbReference type="CDD" id="cd00983">
    <property type="entry name" value="RecA"/>
    <property type="match status" value="1"/>
</dbReference>
<dbReference type="FunFam" id="3.40.50.300:FF:000087">
    <property type="entry name" value="Recombinase RecA"/>
    <property type="match status" value="1"/>
</dbReference>
<dbReference type="Gene3D" id="3.40.50.300">
    <property type="entry name" value="P-loop containing nucleotide triphosphate hydrolases"/>
    <property type="match status" value="1"/>
</dbReference>
<dbReference type="HAMAP" id="MF_00268">
    <property type="entry name" value="RecA"/>
    <property type="match status" value="1"/>
</dbReference>
<dbReference type="InterPro" id="IPR003593">
    <property type="entry name" value="AAA+_ATPase"/>
</dbReference>
<dbReference type="InterPro" id="IPR013765">
    <property type="entry name" value="DNA_recomb/repair_RecA"/>
</dbReference>
<dbReference type="InterPro" id="IPR020584">
    <property type="entry name" value="DNA_recomb/repair_RecA_CS"/>
</dbReference>
<dbReference type="InterPro" id="IPR027417">
    <property type="entry name" value="P-loop_NTPase"/>
</dbReference>
<dbReference type="InterPro" id="IPR049261">
    <property type="entry name" value="RecA-like_C"/>
</dbReference>
<dbReference type="InterPro" id="IPR049428">
    <property type="entry name" value="RecA-like_N"/>
</dbReference>
<dbReference type="InterPro" id="IPR020588">
    <property type="entry name" value="RecA_ATP-bd"/>
</dbReference>
<dbReference type="InterPro" id="IPR023400">
    <property type="entry name" value="RecA_C_sf"/>
</dbReference>
<dbReference type="InterPro" id="IPR020587">
    <property type="entry name" value="RecA_monomer-monomer_interface"/>
</dbReference>
<dbReference type="NCBIfam" id="TIGR02012">
    <property type="entry name" value="tigrfam_recA"/>
    <property type="match status" value="1"/>
</dbReference>
<dbReference type="PANTHER" id="PTHR45900:SF1">
    <property type="entry name" value="MITOCHONDRIAL DNA REPAIR PROTEIN RECA HOMOLOG-RELATED"/>
    <property type="match status" value="1"/>
</dbReference>
<dbReference type="PANTHER" id="PTHR45900">
    <property type="entry name" value="RECA"/>
    <property type="match status" value="1"/>
</dbReference>
<dbReference type="Pfam" id="PF00154">
    <property type="entry name" value="RecA"/>
    <property type="match status" value="1"/>
</dbReference>
<dbReference type="Pfam" id="PF21096">
    <property type="entry name" value="RecA_C"/>
    <property type="match status" value="1"/>
</dbReference>
<dbReference type="PRINTS" id="PR00142">
    <property type="entry name" value="RECA"/>
</dbReference>
<dbReference type="SMART" id="SM00382">
    <property type="entry name" value="AAA"/>
    <property type="match status" value="1"/>
</dbReference>
<dbReference type="SUPFAM" id="SSF52540">
    <property type="entry name" value="P-loop containing nucleoside triphosphate hydrolases"/>
    <property type="match status" value="1"/>
</dbReference>
<dbReference type="SUPFAM" id="SSF54752">
    <property type="entry name" value="RecA protein, C-terminal domain"/>
    <property type="match status" value="1"/>
</dbReference>
<dbReference type="PROSITE" id="PS00321">
    <property type="entry name" value="RECA_1"/>
    <property type="match status" value="1"/>
</dbReference>
<dbReference type="PROSITE" id="PS50162">
    <property type="entry name" value="RECA_2"/>
    <property type="match status" value="1"/>
</dbReference>
<dbReference type="PROSITE" id="PS50163">
    <property type="entry name" value="RECA_3"/>
    <property type="match status" value="1"/>
</dbReference>
<reference key="1">
    <citation type="journal article" date="2006" name="Nat. Genet.">
        <title>The multidrug-resistant human pathogen Clostridium difficile has a highly mobile, mosaic genome.</title>
        <authorList>
            <person name="Sebaihia M."/>
            <person name="Wren B.W."/>
            <person name="Mullany P."/>
            <person name="Fairweather N.F."/>
            <person name="Minton N."/>
            <person name="Stabler R."/>
            <person name="Thomson N.R."/>
            <person name="Roberts A.P."/>
            <person name="Cerdeno-Tarraga A.M."/>
            <person name="Wang H."/>
            <person name="Holden M.T.G."/>
            <person name="Wright A."/>
            <person name="Churcher C."/>
            <person name="Quail M.A."/>
            <person name="Baker S."/>
            <person name="Bason N."/>
            <person name="Brooks K."/>
            <person name="Chillingworth T."/>
            <person name="Cronin A."/>
            <person name="Davis P."/>
            <person name="Dowd L."/>
            <person name="Fraser A."/>
            <person name="Feltwell T."/>
            <person name="Hance Z."/>
            <person name="Holroyd S."/>
            <person name="Jagels K."/>
            <person name="Moule S."/>
            <person name="Mungall K."/>
            <person name="Price C."/>
            <person name="Rabbinowitsch E."/>
            <person name="Sharp S."/>
            <person name="Simmonds M."/>
            <person name="Stevens K."/>
            <person name="Unwin L."/>
            <person name="Whithead S."/>
            <person name="Dupuy B."/>
            <person name="Dougan G."/>
            <person name="Barrell B."/>
            <person name="Parkhill J."/>
        </authorList>
    </citation>
    <scope>NUCLEOTIDE SEQUENCE [LARGE SCALE GENOMIC DNA]</scope>
    <source>
        <strain>630</strain>
    </source>
</reference>
<evidence type="ECO:0000255" key="1">
    <source>
        <dbReference type="HAMAP-Rule" id="MF_00268"/>
    </source>
</evidence>
<sequence length="348" mass="37378">MSVDQEKLKALNEALGKIEKDFGKGSVMKLGEATSMSIDVISTGAIGLDIAIGIGGLPRGRIVEVYGPESSGKTTVALSCVASAQKDGGIAAFIDAEHALDPVYAKALGVDVDNLIISQPDTGEQALEIAEALIRSGAIDIIVIDSVAALVPKAEIDGDMGDSHVGLQARLMSQALRKLTGSIKKSNCVAIFINQLREKVGIMFGNPETTTGGRALKFYSSVRLDVRKIDTIKQGDKVIGSRTRVKVVKNKVAPPFKQAEFDIMYGEGISKIGDLLDIAADVDIVKKSGSWYSYNDTKLGQGRENVKKFLEDNLDLTTEIDEKVRAFYNLNEEHEESGTSVSKEIVEE</sequence>
<name>RECA_CLOD6</name>
<organism>
    <name type="scientific">Clostridioides difficile (strain 630)</name>
    <name type="common">Peptoclostridium difficile</name>
    <dbReference type="NCBI Taxonomy" id="272563"/>
    <lineage>
        <taxon>Bacteria</taxon>
        <taxon>Bacillati</taxon>
        <taxon>Bacillota</taxon>
        <taxon>Clostridia</taxon>
        <taxon>Peptostreptococcales</taxon>
        <taxon>Peptostreptococcaceae</taxon>
        <taxon>Clostridioides</taxon>
    </lineage>
</organism>
<keyword id="KW-0067">ATP-binding</keyword>
<keyword id="KW-0963">Cytoplasm</keyword>
<keyword id="KW-0227">DNA damage</keyword>
<keyword id="KW-0233">DNA recombination</keyword>
<keyword id="KW-0234">DNA repair</keyword>
<keyword id="KW-0238">DNA-binding</keyword>
<keyword id="KW-0547">Nucleotide-binding</keyword>
<keyword id="KW-1185">Reference proteome</keyword>
<keyword id="KW-0742">SOS response</keyword>
<comment type="function">
    <text evidence="1">Can catalyze the hydrolysis of ATP in the presence of single-stranded DNA, the ATP-dependent uptake of single-stranded DNA by duplex DNA, and the ATP-dependent hybridization of homologous single-stranded DNAs. It interacts with LexA causing its activation and leading to its autocatalytic cleavage.</text>
</comment>
<comment type="subcellular location">
    <subcellularLocation>
        <location evidence="1">Cytoplasm</location>
    </subcellularLocation>
</comment>
<comment type="similarity">
    <text evidence="1">Belongs to the RecA family.</text>
</comment>